<dbReference type="EC" id="1.2.1.70" evidence="1"/>
<dbReference type="EMBL" id="CP000435">
    <property type="protein sequence ID" value="ABI47485.1"/>
    <property type="molecule type" value="Genomic_DNA"/>
</dbReference>
<dbReference type="RefSeq" id="WP_011619604.1">
    <property type="nucleotide sequence ID" value="NC_008319.1"/>
</dbReference>
<dbReference type="SMR" id="Q0I9I2"/>
<dbReference type="STRING" id="64471.sync_1686"/>
<dbReference type="KEGG" id="syg:sync_1686"/>
<dbReference type="eggNOG" id="COG0373">
    <property type="taxonomic scope" value="Bacteria"/>
</dbReference>
<dbReference type="HOGENOM" id="CLU_035113_2_1_3"/>
<dbReference type="OrthoDB" id="110209at2"/>
<dbReference type="UniPathway" id="UPA00251">
    <property type="reaction ID" value="UER00316"/>
</dbReference>
<dbReference type="UniPathway" id="UPA00668"/>
<dbReference type="Proteomes" id="UP000001961">
    <property type="component" value="Chromosome"/>
</dbReference>
<dbReference type="GO" id="GO:0008883">
    <property type="term" value="F:glutamyl-tRNA reductase activity"/>
    <property type="evidence" value="ECO:0007669"/>
    <property type="project" value="UniProtKB-UniRule"/>
</dbReference>
<dbReference type="GO" id="GO:0050661">
    <property type="term" value="F:NADP binding"/>
    <property type="evidence" value="ECO:0007669"/>
    <property type="project" value="InterPro"/>
</dbReference>
<dbReference type="GO" id="GO:0015995">
    <property type="term" value="P:chlorophyll biosynthetic process"/>
    <property type="evidence" value="ECO:0007669"/>
    <property type="project" value="UniProtKB-UniRule"/>
</dbReference>
<dbReference type="GO" id="GO:0006782">
    <property type="term" value="P:protoporphyrinogen IX biosynthetic process"/>
    <property type="evidence" value="ECO:0007669"/>
    <property type="project" value="UniProtKB-UniRule"/>
</dbReference>
<dbReference type="CDD" id="cd05213">
    <property type="entry name" value="NAD_bind_Glutamyl_tRNA_reduct"/>
    <property type="match status" value="1"/>
</dbReference>
<dbReference type="FunFam" id="3.30.460.30:FF:000001">
    <property type="entry name" value="Glutamyl-tRNA reductase"/>
    <property type="match status" value="1"/>
</dbReference>
<dbReference type="FunFam" id="3.40.50.720:FF:000031">
    <property type="entry name" value="Glutamyl-tRNA reductase"/>
    <property type="match status" value="1"/>
</dbReference>
<dbReference type="Gene3D" id="3.30.460.30">
    <property type="entry name" value="Glutamyl-tRNA reductase, N-terminal domain"/>
    <property type="match status" value="1"/>
</dbReference>
<dbReference type="Gene3D" id="3.40.50.720">
    <property type="entry name" value="NAD(P)-binding Rossmann-like Domain"/>
    <property type="match status" value="1"/>
</dbReference>
<dbReference type="HAMAP" id="MF_00087">
    <property type="entry name" value="Glu_tRNA_reductase"/>
    <property type="match status" value="1"/>
</dbReference>
<dbReference type="InterPro" id="IPR000343">
    <property type="entry name" value="4pyrrol_synth_GluRdtase"/>
</dbReference>
<dbReference type="InterPro" id="IPR015896">
    <property type="entry name" value="4pyrrol_synth_GluRdtase_dimer"/>
</dbReference>
<dbReference type="InterPro" id="IPR015895">
    <property type="entry name" value="4pyrrol_synth_GluRdtase_N"/>
</dbReference>
<dbReference type="InterPro" id="IPR018214">
    <property type="entry name" value="GluRdtase_CS"/>
</dbReference>
<dbReference type="InterPro" id="IPR036453">
    <property type="entry name" value="GluRdtase_dimer_dom_sf"/>
</dbReference>
<dbReference type="InterPro" id="IPR036343">
    <property type="entry name" value="GluRdtase_N_sf"/>
</dbReference>
<dbReference type="InterPro" id="IPR036291">
    <property type="entry name" value="NAD(P)-bd_dom_sf"/>
</dbReference>
<dbReference type="InterPro" id="IPR006151">
    <property type="entry name" value="Shikm_DH/Glu-tRNA_Rdtase"/>
</dbReference>
<dbReference type="NCBIfam" id="TIGR01035">
    <property type="entry name" value="hemA"/>
    <property type="match status" value="1"/>
</dbReference>
<dbReference type="NCBIfam" id="NF000744">
    <property type="entry name" value="PRK00045.1-3"/>
    <property type="match status" value="1"/>
</dbReference>
<dbReference type="PANTHER" id="PTHR43120">
    <property type="entry name" value="GLUTAMYL-TRNA REDUCTASE 1, CHLOROPLASTIC"/>
    <property type="match status" value="1"/>
</dbReference>
<dbReference type="PANTHER" id="PTHR43120:SF1">
    <property type="entry name" value="GLUTAMYL-TRNA REDUCTASE 1, CHLOROPLASTIC"/>
    <property type="match status" value="1"/>
</dbReference>
<dbReference type="Pfam" id="PF00745">
    <property type="entry name" value="GlutR_dimer"/>
    <property type="match status" value="1"/>
</dbReference>
<dbReference type="Pfam" id="PF05201">
    <property type="entry name" value="GlutR_N"/>
    <property type="match status" value="1"/>
</dbReference>
<dbReference type="Pfam" id="PF01488">
    <property type="entry name" value="Shikimate_DH"/>
    <property type="match status" value="1"/>
</dbReference>
<dbReference type="PIRSF" id="PIRSF000445">
    <property type="entry name" value="4pyrrol_synth_GluRdtase"/>
    <property type="match status" value="1"/>
</dbReference>
<dbReference type="SUPFAM" id="SSF69742">
    <property type="entry name" value="Glutamyl tRNA-reductase catalytic, N-terminal domain"/>
    <property type="match status" value="1"/>
</dbReference>
<dbReference type="SUPFAM" id="SSF69075">
    <property type="entry name" value="Glutamyl tRNA-reductase dimerization domain"/>
    <property type="match status" value="1"/>
</dbReference>
<dbReference type="SUPFAM" id="SSF51735">
    <property type="entry name" value="NAD(P)-binding Rossmann-fold domains"/>
    <property type="match status" value="1"/>
</dbReference>
<dbReference type="PROSITE" id="PS00747">
    <property type="entry name" value="GLUTR"/>
    <property type="match status" value="1"/>
</dbReference>
<reference key="1">
    <citation type="journal article" date="2006" name="Proc. Natl. Acad. Sci. U.S.A.">
        <title>Genome sequence of Synechococcus CC9311: insights into adaptation to a coastal environment.</title>
        <authorList>
            <person name="Palenik B."/>
            <person name="Ren Q."/>
            <person name="Dupont C.L."/>
            <person name="Myers G.S."/>
            <person name="Heidelberg J.F."/>
            <person name="Badger J.H."/>
            <person name="Madupu R."/>
            <person name="Nelson W.C."/>
            <person name="Brinkac L.M."/>
            <person name="Dodson R.J."/>
            <person name="Durkin A.S."/>
            <person name="Daugherty S.C."/>
            <person name="Sullivan S.A."/>
            <person name="Khouri H."/>
            <person name="Mohamoud Y."/>
            <person name="Halpin R."/>
            <person name="Paulsen I.T."/>
        </authorList>
    </citation>
    <scope>NUCLEOTIDE SEQUENCE [LARGE SCALE GENOMIC DNA]</scope>
    <source>
        <strain>CC9311</strain>
    </source>
</reference>
<accession>Q0I9I2</accession>
<sequence length="437" mass="48247">MHIAVVGLSHRTAPVEVREKLSIPEQTMEESLQNLRNHEQVLEASILSTCNRLEIYTLVRNPDLGIAAVRDFLSGHSGLESRDLSPHLFTYHHDEAIAHLMRVTAGLDSLVLGEGQILSQVKKMMRLGQEHKSIGPILNRLLTQAVSTGKRVRSETNLSTGAVSVSSAAVELAQLKLGQSRGQDALVTLETEQIAVVGAGRMSRLLLQHLQAKGASGVVLLNRTIERASALATDFPNLPIQCRGLDDLDQCLSTCSLVFTSTAVDDPIIDANRLNALNRRSSLRLIDIGVPRNIASDVHEVSGVESHDVDDLQEVVERNQEARQQVAREAEGLLLEEGRLFLEWWDSLEAVPTINRLRASLEEIRVEELTKALSRMGPDFSARERKVVEALTKGMINKILHTPVTQLRSPQQRSERQQALQVVEKIFDLESGAATQD</sequence>
<evidence type="ECO:0000255" key="1">
    <source>
        <dbReference type="HAMAP-Rule" id="MF_00087"/>
    </source>
</evidence>
<protein>
    <recommendedName>
        <fullName evidence="1">Glutamyl-tRNA reductase</fullName>
        <shortName evidence="1">GluTR</shortName>
        <ecNumber evidence="1">1.2.1.70</ecNumber>
    </recommendedName>
</protein>
<organism>
    <name type="scientific">Synechococcus sp. (strain CC9311)</name>
    <dbReference type="NCBI Taxonomy" id="64471"/>
    <lineage>
        <taxon>Bacteria</taxon>
        <taxon>Bacillati</taxon>
        <taxon>Cyanobacteriota</taxon>
        <taxon>Cyanophyceae</taxon>
        <taxon>Synechococcales</taxon>
        <taxon>Synechococcaceae</taxon>
        <taxon>Synechococcus</taxon>
    </lineage>
</organism>
<proteinExistence type="inferred from homology"/>
<keyword id="KW-0149">Chlorophyll biosynthesis</keyword>
<keyword id="KW-0521">NADP</keyword>
<keyword id="KW-0560">Oxidoreductase</keyword>
<keyword id="KW-0627">Porphyrin biosynthesis</keyword>
<keyword id="KW-1185">Reference proteome</keyword>
<name>HEM1_SYNS3</name>
<feature type="chain" id="PRO_1000004713" description="Glutamyl-tRNA reductase">
    <location>
        <begin position="1"/>
        <end position="437"/>
    </location>
</feature>
<feature type="active site" description="Nucleophile" evidence="1">
    <location>
        <position position="50"/>
    </location>
</feature>
<feature type="binding site" evidence="1">
    <location>
        <begin position="49"/>
        <end position="52"/>
    </location>
    <ligand>
        <name>substrate</name>
    </ligand>
</feature>
<feature type="binding site" evidence="1">
    <location>
        <position position="109"/>
    </location>
    <ligand>
        <name>substrate</name>
    </ligand>
</feature>
<feature type="binding site" evidence="1">
    <location>
        <begin position="114"/>
        <end position="116"/>
    </location>
    <ligand>
        <name>substrate</name>
    </ligand>
</feature>
<feature type="binding site" evidence="1">
    <location>
        <position position="120"/>
    </location>
    <ligand>
        <name>substrate</name>
    </ligand>
</feature>
<feature type="binding site" evidence="1">
    <location>
        <begin position="198"/>
        <end position="203"/>
    </location>
    <ligand>
        <name>NADP(+)</name>
        <dbReference type="ChEBI" id="CHEBI:58349"/>
    </ligand>
</feature>
<feature type="site" description="Important for activity" evidence="1">
    <location>
        <position position="99"/>
    </location>
</feature>
<gene>
    <name evidence="1" type="primary">hemA</name>
    <name type="ordered locus">sync_1686</name>
</gene>
<comment type="function">
    <text evidence="1">Catalyzes the NADPH-dependent reduction of glutamyl-tRNA(Glu) to glutamate 1-semialdehyde (GSA).</text>
</comment>
<comment type="catalytic activity">
    <reaction evidence="1">
        <text>(S)-4-amino-5-oxopentanoate + tRNA(Glu) + NADP(+) = L-glutamyl-tRNA(Glu) + NADPH + H(+)</text>
        <dbReference type="Rhea" id="RHEA:12344"/>
        <dbReference type="Rhea" id="RHEA-COMP:9663"/>
        <dbReference type="Rhea" id="RHEA-COMP:9680"/>
        <dbReference type="ChEBI" id="CHEBI:15378"/>
        <dbReference type="ChEBI" id="CHEBI:57501"/>
        <dbReference type="ChEBI" id="CHEBI:57783"/>
        <dbReference type="ChEBI" id="CHEBI:58349"/>
        <dbReference type="ChEBI" id="CHEBI:78442"/>
        <dbReference type="ChEBI" id="CHEBI:78520"/>
        <dbReference type="EC" id="1.2.1.70"/>
    </reaction>
</comment>
<comment type="pathway">
    <text evidence="1">Porphyrin-containing compound metabolism; protoporphyrin-IX biosynthesis; 5-aminolevulinate from L-glutamyl-tRNA(Glu): step 1/2.</text>
</comment>
<comment type="pathway">
    <text evidence="1">Porphyrin-containing compound metabolism; chlorophyll biosynthesis.</text>
</comment>
<comment type="subunit">
    <text evidence="1">Homodimer.</text>
</comment>
<comment type="domain">
    <text evidence="1">Possesses an unusual extended V-shaped dimeric structure with each monomer consisting of three distinct domains arranged along a curved 'spinal' alpha-helix. The N-terminal catalytic domain specifically recognizes the glutamate moiety of the substrate. The second domain is the NADPH-binding domain, and the third C-terminal domain is responsible for dimerization.</text>
</comment>
<comment type="miscellaneous">
    <text evidence="1">During catalysis, the active site Cys acts as a nucleophile attacking the alpha-carbonyl group of tRNA-bound glutamate with the formation of a thioester intermediate between enzyme and glutamate, and the concomitant release of tRNA(Glu). The thioester intermediate is finally reduced by direct hydride transfer from NADPH, to form the product GSA.</text>
</comment>
<comment type="similarity">
    <text evidence="1">Belongs to the glutamyl-tRNA reductase family.</text>
</comment>